<name>LEPA_CHLT2</name>
<proteinExistence type="inferred from homology"/>
<protein>
    <recommendedName>
        <fullName evidence="1">Elongation factor 4</fullName>
        <shortName evidence="1">EF-4</shortName>
        <ecNumber evidence="1">3.6.5.n1</ecNumber>
    </recommendedName>
    <alternativeName>
        <fullName evidence="1">Ribosomal back-translocase LepA</fullName>
    </alternativeName>
</protein>
<feature type="chain" id="PRO_1000092385" description="Elongation factor 4">
    <location>
        <begin position="1"/>
        <end position="602"/>
    </location>
</feature>
<feature type="domain" description="tr-type G">
    <location>
        <begin position="7"/>
        <end position="188"/>
    </location>
</feature>
<feature type="binding site" evidence="1">
    <location>
        <begin position="19"/>
        <end position="24"/>
    </location>
    <ligand>
        <name>GTP</name>
        <dbReference type="ChEBI" id="CHEBI:37565"/>
    </ligand>
</feature>
<feature type="binding site" evidence="1">
    <location>
        <begin position="135"/>
        <end position="138"/>
    </location>
    <ligand>
        <name>GTP</name>
        <dbReference type="ChEBI" id="CHEBI:37565"/>
    </ligand>
</feature>
<sequence>MKPYKIENIRNFSIIAHIDHGKSTIADRLLESTSTIEQREMREQLLDSMDLERERGITIKAHPVTMTYEYEGETYELNLIDTPGHVDFSYEVSRSLAACEGALLIVDAAQGVQAQSLANVYLALERDLEIIPVLNKIDLPAAQPEAIKKQIEEFIGLDTSNTIACSAKTGQGIPEILESIIRLVPPPKPPQETELKALIFDSHYDPYVGIMVYVRVISGEIKKGDRITFMATKGSSFEVLGIGAFLPEATLMEGSLRAGQVGYFIANLKKVKDVKIGDTVTTVKHPAKEPLEGFKEIKPVVFAGIYPIDSSDFDTLKDALGRLQLNDSALTIEQESSHSLGFGFRCGFLGLLHLEIIFERISREFDLDIIATAPSVIYKVVLKNGKTLFIDNPTAYPDPALIEHMEEPWVHVNIITPQEYLSNIMSLCMDKRGICLKTDMLDQHRLVLSYELPLNEIVSDFNDKLKSVTKGYGSFDYRLGDYKKGAIIKLEILINDEAVDAFSCLVHRDKAESKGRSICEKLVDVIPPQLFKIPIQAAINKKIIARETIRALAKNVTAKCYGGDITRKRKLWDKQKKGKKRMKEFGKVSIPNTAFVEVLKME</sequence>
<organism>
    <name type="scientific">Chlamydia trachomatis serovar L2 (strain ATCC VR-902B / DSM 19102 / 434/Bu)</name>
    <dbReference type="NCBI Taxonomy" id="471472"/>
    <lineage>
        <taxon>Bacteria</taxon>
        <taxon>Pseudomonadati</taxon>
        <taxon>Chlamydiota</taxon>
        <taxon>Chlamydiia</taxon>
        <taxon>Chlamydiales</taxon>
        <taxon>Chlamydiaceae</taxon>
        <taxon>Chlamydia/Chlamydophila group</taxon>
        <taxon>Chlamydia</taxon>
    </lineage>
</organism>
<reference key="1">
    <citation type="journal article" date="2008" name="Genome Res.">
        <title>Chlamydia trachomatis: genome sequence analysis of lymphogranuloma venereum isolates.</title>
        <authorList>
            <person name="Thomson N.R."/>
            <person name="Holden M.T.G."/>
            <person name="Carder C."/>
            <person name="Lennard N."/>
            <person name="Lockey S.J."/>
            <person name="Marsh P."/>
            <person name="Skipp P."/>
            <person name="O'Connor C.D."/>
            <person name="Goodhead I."/>
            <person name="Norbertzcak H."/>
            <person name="Harris B."/>
            <person name="Ormond D."/>
            <person name="Rance R."/>
            <person name="Quail M.A."/>
            <person name="Parkhill J."/>
            <person name="Stephens R.S."/>
            <person name="Clarke I.N."/>
        </authorList>
    </citation>
    <scope>NUCLEOTIDE SEQUENCE [LARGE SCALE GENOMIC DNA]</scope>
    <source>
        <strain>ATCC VR-902B / DSM 19102 / 434/Bu</strain>
    </source>
</reference>
<comment type="function">
    <text evidence="1">Required for accurate and efficient protein synthesis under certain stress conditions. May act as a fidelity factor of the translation reaction, by catalyzing a one-codon backward translocation of tRNAs on improperly translocated ribosomes. Back-translocation proceeds from a post-translocation (POST) complex to a pre-translocation (PRE) complex, thus giving elongation factor G a second chance to translocate the tRNAs correctly. Binds to ribosomes in a GTP-dependent manner.</text>
</comment>
<comment type="catalytic activity">
    <reaction evidence="1">
        <text>GTP + H2O = GDP + phosphate + H(+)</text>
        <dbReference type="Rhea" id="RHEA:19669"/>
        <dbReference type="ChEBI" id="CHEBI:15377"/>
        <dbReference type="ChEBI" id="CHEBI:15378"/>
        <dbReference type="ChEBI" id="CHEBI:37565"/>
        <dbReference type="ChEBI" id="CHEBI:43474"/>
        <dbReference type="ChEBI" id="CHEBI:58189"/>
        <dbReference type="EC" id="3.6.5.n1"/>
    </reaction>
</comment>
<comment type="subcellular location">
    <subcellularLocation>
        <location evidence="1">Cell inner membrane</location>
        <topology evidence="1">Peripheral membrane protein</topology>
        <orientation evidence="1">Cytoplasmic side</orientation>
    </subcellularLocation>
</comment>
<comment type="similarity">
    <text evidence="1">Belongs to the TRAFAC class translation factor GTPase superfamily. Classic translation factor GTPase family. LepA subfamily.</text>
</comment>
<keyword id="KW-0997">Cell inner membrane</keyword>
<keyword id="KW-1003">Cell membrane</keyword>
<keyword id="KW-0342">GTP-binding</keyword>
<keyword id="KW-0378">Hydrolase</keyword>
<keyword id="KW-0472">Membrane</keyword>
<keyword id="KW-0547">Nucleotide-binding</keyword>
<keyword id="KW-0648">Protein biosynthesis</keyword>
<gene>
    <name evidence="1" type="primary">lepA</name>
    <name type="ordered locus">CTL0320</name>
</gene>
<dbReference type="EC" id="3.6.5.n1" evidence="1"/>
<dbReference type="EMBL" id="AM884176">
    <property type="protein sequence ID" value="CAP03759.1"/>
    <property type="molecule type" value="Genomic_DNA"/>
</dbReference>
<dbReference type="RefSeq" id="WP_009871412.1">
    <property type="nucleotide sequence ID" value="NC_010287.1"/>
</dbReference>
<dbReference type="RefSeq" id="YP_001654403.1">
    <property type="nucleotide sequence ID" value="NC_010287.1"/>
</dbReference>
<dbReference type="SMR" id="B0B9H2"/>
<dbReference type="KEGG" id="ctb:CTL0320"/>
<dbReference type="PATRIC" id="fig|471472.4.peg.347"/>
<dbReference type="HOGENOM" id="CLU_009995_3_3_0"/>
<dbReference type="Proteomes" id="UP001154402">
    <property type="component" value="Chromosome"/>
</dbReference>
<dbReference type="GO" id="GO:0005886">
    <property type="term" value="C:plasma membrane"/>
    <property type="evidence" value="ECO:0007669"/>
    <property type="project" value="UniProtKB-SubCell"/>
</dbReference>
<dbReference type="GO" id="GO:0005525">
    <property type="term" value="F:GTP binding"/>
    <property type="evidence" value="ECO:0007669"/>
    <property type="project" value="UniProtKB-UniRule"/>
</dbReference>
<dbReference type="GO" id="GO:0003924">
    <property type="term" value="F:GTPase activity"/>
    <property type="evidence" value="ECO:0007669"/>
    <property type="project" value="UniProtKB-UniRule"/>
</dbReference>
<dbReference type="GO" id="GO:0043022">
    <property type="term" value="F:ribosome binding"/>
    <property type="evidence" value="ECO:0007669"/>
    <property type="project" value="UniProtKB-UniRule"/>
</dbReference>
<dbReference type="GO" id="GO:0003746">
    <property type="term" value="F:translation elongation factor activity"/>
    <property type="evidence" value="ECO:0007669"/>
    <property type="project" value="UniProtKB-UniRule"/>
</dbReference>
<dbReference type="GO" id="GO:0045727">
    <property type="term" value="P:positive regulation of translation"/>
    <property type="evidence" value="ECO:0007669"/>
    <property type="project" value="UniProtKB-UniRule"/>
</dbReference>
<dbReference type="CDD" id="cd03699">
    <property type="entry name" value="EF4_II"/>
    <property type="match status" value="1"/>
</dbReference>
<dbReference type="CDD" id="cd16260">
    <property type="entry name" value="EF4_III"/>
    <property type="match status" value="1"/>
</dbReference>
<dbReference type="CDD" id="cd01890">
    <property type="entry name" value="LepA"/>
    <property type="match status" value="1"/>
</dbReference>
<dbReference type="CDD" id="cd03709">
    <property type="entry name" value="lepA_C"/>
    <property type="match status" value="1"/>
</dbReference>
<dbReference type="FunFam" id="3.40.50.300:FF:000078">
    <property type="entry name" value="Elongation factor 4"/>
    <property type="match status" value="1"/>
</dbReference>
<dbReference type="FunFam" id="2.40.30.10:FF:000015">
    <property type="entry name" value="Translation factor GUF1, mitochondrial"/>
    <property type="match status" value="1"/>
</dbReference>
<dbReference type="FunFam" id="3.30.70.240:FF:000007">
    <property type="entry name" value="Translation factor GUF1, mitochondrial"/>
    <property type="match status" value="1"/>
</dbReference>
<dbReference type="FunFam" id="3.30.70.2570:FF:000001">
    <property type="entry name" value="Translation factor GUF1, mitochondrial"/>
    <property type="match status" value="1"/>
</dbReference>
<dbReference type="FunFam" id="3.30.70.870:FF:000004">
    <property type="entry name" value="Translation factor GUF1, mitochondrial"/>
    <property type="match status" value="1"/>
</dbReference>
<dbReference type="Gene3D" id="3.30.70.240">
    <property type="match status" value="1"/>
</dbReference>
<dbReference type="Gene3D" id="3.30.70.2570">
    <property type="entry name" value="Elongation factor 4, C-terminal domain"/>
    <property type="match status" value="1"/>
</dbReference>
<dbReference type="Gene3D" id="3.30.70.870">
    <property type="entry name" value="Elongation Factor G (Translational Gtpase), domain 3"/>
    <property type="match status" value="1"/>
</dbReference>
<dbReference type="Gene3D" id="3.40.50.300">
    <property type="entry name" value="P-loop containing nucleotide triphosphate hydrolases"/>
    <property type="match status" value="1"/>
</dbReference>
<dbReference type="Gene3D" id="2.40.30.10">
    <property type="entry name" value="Translation factors"/>
    <property type="match status" value="1"/>
</dbReference>
<dbReference type="HAMAP" id="MF_00071">
    <property type="entry name" value="LepA"/>
    <property type="match status" value="1"/>
</dbReference>
<dbReference type="InterPro" id="IPR006297">
    <property type="entry name" value="EF-4"/>
</dbReference>
<dbReference type="InterPro" id="IPR035647">
    <property type="entry name" value="EFG_III/V"/>
</dbReference>
<dbReference type="InterPro" id="IPR000640">
    <property type="entry name" value="EFG_V-like"/>
</dbReference>
<dbReference type="InterPro" id="IPR004161">
    <property type="entry name" value="EFTu-like_2"/>
</dbReference>
<dbReference type="InterPro" id="IPR038363">
    <property type="entry name" value="LepA_C_sf"/>
</dbReference>
<dbReference type="InterPro" id="IPR013842">
    <property type="entry name" value="LepA_CTD"/>
</dbReference>
<dbReference type="InterPro" id="IPR035654">
    <property type="entry name" value="LepA_IV"/>
</dbReference>
<dbReference type="InterPro" id="IPR027417">
    <property type="entry name" value="P-loop_NTPase"/>
</dbReference>
<dbReference type="InterPro" id="IPR005225">
    <property type="entry name" value="Small_GTP-bd"/>
</dbReference>
<dbReference type="InterPro" id="IPR000795">
    <property type="entry name" value="T_Tr_GTP-bd_dom"/>
</dbReference>
<dbReference type="InterPro" id="IPR009000">
    <property type="entry name" value="Transl_B-barrel_sf"/>
</dbReference>
<dbReference type="NCBIfam" id="TIGR01393">
    <property type="entry name" value="lepA"/>
    <property type="match status" value="1"/>
</dbReference>
<dbReference type="NCBIfam" id="TIGR00231">
    <property type="entry name" value="small_GTP"/>
    <property type="match status" value="1"/>
</dbReference>
<dbReference type="PANTHER" id="PTHR43512:SF4">
    <property type="entry name" value="TRANSLATION FACTOR GUF1 HOMOLOG, CHLOROPLASTIC"/>
    <property type="match status" value="1"/>
</dbReference>
<dbReference type="PANTHER" id="PTHR43512">
    <property type="entry name" value="TRANSLATION FACTOR GUF1-RELATED"/>
    <property type="match status" value="1"/>
</dbReference>
<dbReference type="Pfam" id="PF00679">
    <property type="entry name" value="EFG_C"/>
    <property type="match status" value="1"/>
</dbReference>
<dbReference type="Pfam" id="PF00009">
    <property type="entry name" value="GTP_EFTU"/>
    <property type="match status" value="1"/>
</dbReference>
<dbReference type="Pfam" id="PF03144">
    <property type="entry name" value="GTP_EFTU_D2"/>
    <property type="match status" value="1"/>
</dbReference>
<dbReference type="Pfam" id="PF06421">
    <property type="entry name" value="LepA_C"/>
    <property type="match status" value="1"/>
</dbReference>
<dbReference type="PRINTS" id="PR00315">
    <property type="entry name" value="ELONGATNFCT"/>
</dbReference>
<dbReference type="SUPFAM" id="SSF54980">
    <property type="entry name" value="EF-G C-terminal domain-like"/>
    <property type="match status" value="2"/>
</dbReference>
<dbReference type="SUPFAM" id="SSF52540">
    <property type="entry name" value="P-loop containing nucleoside triphosphate hydrolases"/>
    <property type="match status" value="1"/>
</dbReference>
<dbReference type="SUPFAM" id="SSF50447">
    <property type="entry name" value="Translation proteins"/>
    <property type="match status" value="1"/>
</dbReference>
<dbReference type="PROSITE" id="PS51722">
    <property type="entry name" value="G_TR_2"/>
    <property type="match status" value="1"/>
</dbReference>
<evidence type="ECO:0000255" key="1">
    <source>
        <dbReference type="HAMAP-Rule" id="MF_00071"/>
    </source>
</evidence>
<accession>B0B9H2</accession>